<proteinExistence type="inferred from homology"/>
<dbReference type="EC" id="6.1.1.11" evidence="1"/>
<dbReference type="EMBL" id="BX548175">
    <property type="protein sequence ID" value="CAE21549.1"/>
    <property type="status" value="ALT_INIT"/>
    <property type="molecule type" value="Genomic_DNA"/>
</dbReference>
<dbReference type="RefSeq" id="WP_011130742.1">
    <property type="nucleotide sequence ID" value="NC_005071.1"/>
</dbReference>
<dbReference type="SMR" id="Q7V608"/>
<dbReference type="KEGG" id="pmt:PMT_1374"/>
<dbReference type="eggNOG" id="COG0172">
    <property type="taxonomic scope" value="Bacteria"/>
</dbReference>
<dbReference type="HOGENOM" id="CLU_023797_1_1_3"/>
<dbReference type="OrthoDB" id="9804647at2"/>
<dbReference type="UniPathway" id="UPA00906">
    <property type="reaction ID" value="UER00895"/>
</dbReference>
<dbReference type="Proteomes" id="UP000001423">
    <property type="component" value="Chromosome"/>
</dbReference>
<dbReference type="GO" id="GO:0005737">
    <property type="term" value="C:cytoplasm"/>
    <property type="evidence" value="ECO:0007669"/>
    <property type="project" value="UniProtKB-SubCell"/>
</dbReference>
<dbReference type="GO" id="GO:0005524">
    <property type="term" value="F:ATP binding"/>
    <property type="evidence" value="ECO:0007669"/>
    <property type="project" value="UniProtKB-UniRule"/>
</dbReference>
<dbReference type="GO" id="GO:0004828">
    <property type="term" value="F:serine-tRNA ligase activity"/>
    <property type="evidence" value="ECO:0007669"/>
    <property type="project" value="UniProtKB-UniRule"/>
</dbReference>
<dbReference type="GO" id="GO:0016260">
    <property type="term" value="P:selenocysteine biosynthetic process"/>
    <property type="evidence" value="ECO:0007669"/>
    <property type="project" value="UniProtKB-UniRule"/>
</dbReference>
<dbReference type="GO" id="GO:0006434">
    <property type="term" value="P:seryl-tRNA aminoacylation"/>
    <property type="evidence" value="ECO:0007669"/>
    <property type="project" value="UniProtKB-UniRule"/>
</dbReference>
<dbReference type="CDD" id="cd00770">
    <property type="entry name" value="SerRS_core"/>
    <property type="match status" value="1"/>
</dbReference>
<dbReference type="Gene3D" id="3.30.930.10">
    <property type="entry name" value="Bira Bifunctional Protein, Domain 2"/>
    <property type="match status" value="1"/>
</dbReference>
<dbReference type="Gene3D" id="1.10.287.40">
    <property type="entry name" value="Serine-tRNA synthetase, tRNA binding domain"/>
    <property type="match status" value="1"/>
</dbReference>
<dbReference type="HAMAP" id="MF_00176">
    <property type="entry name" value="Ser_tRNA_synth_type1"/>
    <property type="match status" value="1"/>
</dbReference>
<dbReference type="InterPro" id="IPR002314">
    <property type="entry name" value="aa-tRNA-synt_IIb"/>
</dbReference>
<dbReference type="InterPro" id="IPR006195">
    <property type="entry name" value="aa-tRNA-synth_II"/>
</dbReference>
<dbReference type="InterPro" id="IPR045864">
    <property type="entry name" value="aa-tRNA-synth_II/BPL/LPL"/>
</dbReference>
<dbReference type="InterPro" id="IPR002317">
    <property type="entry name" value="Ser-tRNA-ligase_type_1"/>
</dbReference>
<dbReference type="InterPro" id="IPR015866">
    <property type="entry name" value="Ser-tRNA-synth_1_N"/>
</dbReference>
<dbReference type="InterPro" id="IPR042103">
    <property type="entry name" value="SerRS_1_N_sf"/>
</dbReference>
<dbReference type="InterPro" id="IPR033729">
    <property type="entry name" value="SerRS_core"/>
</dbReference>
<dbReference type="InterPro" id="IPR010978">
    <property type="entry name" value="tRNA-bd_arm"/>
</dbReference>
<dbReference type="NCBIfam" id="TIGR00414">
    <property type="entry name" value="serS"/>
    <property type="match status" value="1"/>
</dbReference>
<dbReference type="PANTHER" id="PTHR43697:SF1">
    <property type="entry name" value="SERINE--TRNA LIGASE"/>
    <property type="match status" value="1"/>
</dbReference>
<dbReference type="PANTHER" id="PTHR43697">
    <property type="entry name" value="SERYL-TRNA SYNTHETASE"/>
    <property type="match status" value="1"/>
</dbReference>
<dbReference type="Pfam" id="PF02403">
    <property type="entry name" value="Seryl_tRNA_N"/>
    <property type="match status" value="1"/>
</dbReference>
<dbReference type="Pfam" id="PF00587">
    <property type="entry name" value="tRNA-synt_2b"/>
    <property type="match status" value="1"/>
</dbReference>
<dbReference type="PIRSF" id="PIRSF001529">
    <property type="entry name" value="Ser-tRNA-synth_IIa"/>
    <property type="match status" value="1"/>
</dbReference>
<dbReference type="PRINTS" id="PR00981">
    <property type="entry name" value="TRNASYNTHSER"/>
</dbReference>
<dbReference type="SUPFAM" id="SSF55681">
    <property type="entry name" value="Class II aaRS and biotin synthetases"/>
    <property type="match status" value="1"/>
</dbReference>
<dbReference type="SUPFAM" id="SSF46589">
    <property type="entry name" value="tRNA-binding arm"/>
    <property type="match status" value="1"/>
</dbReference>
<dbReference type="PROSITE" id="PS50862">
    <property type="entry name" value="AA_TRNA_LIGASE_II"/>
    <property type="match status" value="1"/>
</dbReference>
<feature type="chain" id="PRO_0000122099" description="Serine--tRNA ligase">
    <location>
        <begin position="1"/>
        <end position="425"/>
    </location>
</feature>
<feature type="region of interest" description="Disordered" evidence="2">
    <location>
        <begin position="43"/>
        <end position="69"/>
    </location>
</feature>
<feature type="region of interest" description="Disordered" evidence="2">
    <location>
        <begin position="108"/>
        <end position="134"/>
    </location>
</feature>
<feature type="compositionally biased region" description="Basic and acidic residues" evidence="2">
    <location>
        <begin position="117"/>
        <end position="134"/>
    </location>
</feature>
<feature type="binding site" evidence="1">
    <location>
        <begin position="233"/>
        <end position="235"/>
    </location>
    <ligand>
        <name>L-serine</name>
        <dbReference type="ChEBI" id="CHEBI:33384"/>
    </ligand>
</feature>
<feature type="binding site" evidence="1">
    <location>
        <begin position="264"/>
        <end position="266"/>
    </location>
    <ligand>
        <name>ATP</name>
        <dbReference type="ChEBI" id="CHEBI:30616"/>
    </ligand>
</feature>
<feature type="binding site" evidence="1">
    <location>
        <position position="287"/>
    </location>
    <ligand>
        <name>L-serine</name>
        <dbReference type="ChEBI" id="CHEBI:33384"/>
    </ligand>
</feature>
<feature type="binding site" evidence="1">
    <location>
        <begin position="351"/>
        <end position="354"/>
    </location>
    <ligand>
        <name>ATP</name>
        <dbReference type="ChEBI" id="CHEBI:30616"/>
    </ligand>
</feature>
<feature type="binding site" evidence="1">
    <location>
        <position position="385"/>
    </location>
    <ligand>
        <name>L-serine</name>
        <dbReference type="ChEBI" id="CHEBI:33384"/>
    </ligand>
</feature>
<accession>Q7V608</accession>
<sequence>MLDQRLVRDNPDLIANELGRRGITLDLTGLQLIAQQQRNLEEQRSSLQAEGNRIGKEVGQRIQQGSDPKASDVAELRQQGNLIKQKVAVLEDEEKQLSARLREQLLSLPNLPSPDCPEGRDENDNQERHRWGKPREGKDLLEHWSIAERLKLFETERSVRIAQSRFVTLMGQGARLERALINFMLDLHTSKGYREVMPPVLVNTASLTGSGQLPKFAEESFRCAEDDLWLTPTAEVPVTSLHRDEIIPAEQLPLRYAAYSPCFRREAGSYGRDTRGLIRLHQFNKVELYWFVHPDHSQAAHAQITADAEAVLQALELPYRVIELCTGDLGFSSSRTYDLEVWLPGAGAFREISSCSICGDFQARRSAIRTKDEKGTRLIHTLNGSGLAVGRTMAALLETGQQSDGSVLLPKALVPYFGNDRLEPE</sequence>
<name>SYS_PROMM</name>
<protein>
    <recommendedName>
        <fullName evidence="1">Serine--tRNA ligase</fullName>
        <ecNumber evidence="1">6.1.1.11</ecNumber>
    </recommendedName>
    <alternativeName>
        <fullName evidence="1">Seryl-tRNA synthetase</fullName>
        <shortName evidence="1">SerRS</shortName>
    </alternativeName>
    <alternativeName>
        <fullName evidence="1">Seryl-tRNA(Ser/Sec) synthetase</fullName>
    </alternativeName>
</protein>
<evidence type="ECO:0000255" key="1">
    <source>
        <dbReference type="HAMAP-Rule" id="MF_00176"/>
    </source>
</evidence>
<evidence type="ECO:0000256" key="2">
    <source>
        <dbReference type="SAM" id="MobiDB-lite"/>
    </source>
</evidence>
<evidence type="ECO:0000305" key="3"/>
<gene>
    <name evidence="1" type="primary">serS</name>
    <name type="ordered locus">PMT_1374</name>
</gene>
<keyword id="KW-0030">Aminoacyl-tRNA synthetase</keyword>
<keyword id="KW-0067">ATP-binding</keyword>
<keyword id="KW-0963">Cytoplasm</keyword>
<keyword id="KW-0436">Ligase</keyword>
<keyword id="KW-0547">Nucleotide-binding</keyword>
<keyword id="KW-0648">Protein biosynthesis</keyword>
<keyword id="KW-1185">Reference proteome</keyword>
<organism>
    <name type="scientific">Prochlorococcus marinus (strain MIT 9313)</name>
    <dbReference type="NCBI Taxonomy" id="74547"/>
    <lineage>
        <taxon>Bacteria</taxon>
        <taxon>Bacillati</taxon>
        <taxon>Cyanobacteriota</taxon>
        <taxon>Cyanophyceae</taxon>
        <taxon>Synechococcales</taxon>
        <taxon>Prochlorococcaceae</taxon>
        <taxon>Prochlorococcus</taxon>
    </lineage>
</organism>
<comment type="function">
    <text evidence="1">Catalyzes the attachment of serine to tRNA(Ser). Is also able to aminoacylate tRNA(Sec) with serine, to form the misacylated tRNA L-seryl-tRNA(Sec), which will be further converted into selenocysteinyl-tRNA(Sec).</text>
</comment>
<comment type="catalytic activity">
    <reaction evidence="1">
        <text>tRNA(Ser) + L-serine + ATP = L-seryl-tRNA(Ser) + AMP + diphosphate + H(+)</text>
        <dbReference type="Rhea" id="RHEA:12292"/>
        <dbReference type="Rhea" id="RHEA-COMP:9669"/>
        <dbReference type="Rhea" id="RHEA-COMP:9703"/>
        <dbReference type="ChEBI" id="CHEBI:15378"/>
        <dbReference type="ChEBI" id="CHEBI:30616"/>
        <dbReference type="ChEBI" id="CHEBI:33019"/>
        <dbReference type="ChEBI" id="CHEBI:33384"/>
        <dbReference type="ChEBI" id="CHEBI:78442"/>
        <dbReference type="ChEBI" id="CHEBI:78533"/>
        <dbReference type="ChEBI" id="CHEBI:456215"/>
        <dbReference type="EC" id="6.1.1.11"/>
    </reaction>
</comment>
<comment type="catalytic activity">
    <reaction evidence="1">
        <text>tRNA(Sec) + L-serine + ATP = L-seryl-tRNA(Sec) + AMP + diphosphate + H(+)</text>
        <dbReference type="Rhea" id="RHEA:42580"/>
        <dbReference type="Rhea" id="RHEA-COMP:9742"/>
        <dbReference type="Rhea" id="RHEA-COMP:10128"/>
        <dbReference type="ChEBI" id="CHEBI:15378"/>
        <dbReference type="ChEBI" id="CHEBI:30616"/>
        <dbReference type="ChEBI" id="CHEBI:33019"/>
        <dbReference type="ChEBI" id="CHEBI:33384"/>
        <dbReference type="ChEBI" id="CHEBI:78442"/>
        <dbReference type="ChEBI" id="CHEBI:78533"/>
        <dbReference type="ChEBI" id="CHEBI:456215"/>
        <dbReference type="EC" id="6.1.1.11"/>
    </reaction>
</comment>
<comment type="pathway">
    <text evidence="1">Aminoacyl-tRNA biosynthesis; selenocysteinyl-tRNA(Sec) biosynthesis; L-seryl-tRNA(Sec) from L-serine and tRNA(Sec): step 1/1.</text>
</comment>
<comment type="subunit">
    <text evidence="1">Homodimer. The tRNA molecule binds across the dimer.</text>
</comment>
<comment type="subcellular location">
    <subcellularLocation>
        <location evidence="1">Cytoplasm</location>
    </subcellularLocation>
</comment>
<comment type="domain">
    <text evidence="1">Consists of two distinct domains, a catalytic core and a N-terminal extension that is involved in tRNA binding.</text>
</comment>
<comment type="similarity">
    <text evidence="1">Belongs to the class-II aminoacyl-tRNA synthetase family. Type-1 seryl-tRNA synthetase subfamily.</text>
</comment>
<comment type="sequence caution" evidence="3">
    <conflict type="erroneous initiation">
        <sequence resource="EMBL-CDS" id="CAE21549"/>
    </conflict>
</comment>
<reference key="1">
    <citation type="journal article" date="2003" name="Nature">
        <title>Genome divergence in two Prochlorococcus ecotypes reflects oceanic niche differentiation.</title>
        <authorList>
            <person name="Rocap G."/>
            <person name="Larimer F.W."/>
            <person name="Lamerdin J.E."/>
            <person name="Malfatti S."/>
            <person name="Chain P."/>
            <person name="Ahlgren N.A."/>
            <person name="Arellano A."/>
            <person name="Coleman M."/>
            <person name="Hauser L."/>
            <person name="Hess W.R."/>
            <person name="Johnson Z.I."/>
            <person name="Land M.L."/>
            <person name="Lindell D."/>
            <person name="Post A.F."/>
            <person name="Regala W."/>
            <person name="Shah M."/>
            <person name="Shaw S.L."/>
            <person name="Steglich C."/>
            <person name="Sullivan M.B."/>
            <person name="Ting C.S."/>
            <person name="Tolonen A."/>
            <person name="Webb E.A."/>
            <person name="Zinser E.R."/>
            <person name="Chisholm S.W."/>
        </authorList>
    </citation>
    <scope>NUCLEOTIDE SEQUENCE [LARGE SCALE GENOMIC DNA]</scope>
    <source>
        <strain>MIT 9313</strain>
    </source>
</reference>